<reference key="1">
    <citation type="submission" date="2008-03" db="EMBL/GenBank/DDBJ databases">
        <title>Complete sequence of Leptothrix cholodnii SP-6.</title>
        <authorList>
            <consortium name="US DOE Joint Genome Institute"/>
            <person name="Copeland A."/>
            <person name="Lucas S."/>
            <person name="Lapidus A."/>
            <person name="Glavina del Rio T."/>
            <person name="Dalin E."/>
            <person name="Tice H."/>
            <person name="Bruce D."/>
            <person name="Goodwin L."/>
            <person name="Pitluck S."/>
            <person name="Chertkov O."/>
            <person name="Brettin T."/>
            <person name="Detter J.C."/>
            <person name="Han C."/>
            <person name="Kuske C.R."/>
            <person name="Schmutz J."/>
            <person name="Larimer F."/>
            <person name="Land M."/>
            <person name="Hauser L."/>
            <person name="Kyrpides N."/>
            <person name="Lykidis A."/>
            <person name="Emerson D."/>
            <person name="Richardson P."/>
        </authorList>
    </citation>
    <scope>NUCLEOTIDE SEQUENCE [LARGE SCALE GENOMIC DNA]</scope>
    <source>
        <strain>ATCC 51168 / LMG 8142 / SP-6</strain>
    </source>
</reference>
<gene>
    <name evidence="1" type="primary">rplN</name>
    <name type="ordered locus">Lcho_3939</name>
</gene>
<proteinExistence type="inferred from homology"/>
<dbReference type="EMBL" id="CP001013">
    <property type="protein sequence ID" value="ACB36193.1"/>
    <property type="molecule type" value="Genomic_DNA"/>
</dbReference>
<dbReference type="RefSeq" id="WP_012348938.1">
    <property type="nucleotide sequence ID" value="NC_010524.1"/>
</dbReference>
<dbReference type="SMR" id="B1Y8C7"/>
<dbReference type="STRING" id="395495.Lcho_3939"/>
<dbReference type="KEGG" id="lch:Lcho_3939"/>
<dbReference type="eggNOG" id="COG0093">
    <property type="taxonomic scope" value="Bacteria"/>
</dbReference>
<dbReference type="HOGENOM" id="CLU_095071_2_1_4"/>
<dbReference type="OrthoDB" id="9806379at2"/>
<dbReference type="Proteomes" id="UP000001693">
    <property type="component" value="Chromosome"/>
</dbReference>
<dbReference type="GO" id="GO:0022625">
    <property type="term" value="C:cytosolic large ribosomal subunit"/>
    <property type="evidence" value="ECO:0007669"/>
    <property type="project" value="TreeGrafter"/>
</dbReference>
<dbReference type="GO" id="GO:0070180">
    <property type="term" value="F:large ribosomal subunit rRNA binding"/>
    <property type="evidence" value="ECO:0007669"/>
    <property type="project" value="TreeGrafter"/>
</dbReference>
<dbReference type="GO" id="GO:0003735">
    <property type="term" value="F:structural constituent of ribosome"/>
    <property type="evidence" value="ECO:0007669"/>
    <property type="project" value="InterPro"/>
</dbReference>
<dbReference type="GO" id="GO:0006412">
    <property type="term" value="P:translation"/>
    <property type="evidence" value="ECO:0007669"/>
    <property type="project" value="UniProtKB-UniRule"/>
</dbReference>
<dbReference type="CDD" id="cd00337">
    <property type="entry name" value="Ribosomal_uL14"/>
    <property type="match status" value="1"/>
</dbReference>
<dbReference type="FunFam" id="2.40.150.20:FF:000001">
    <property type="entry name" value="50S ribosomal protein L14"/>
    <property type="match status" value="1"/>
</dbReference>
<dbReference type="Gene3D" id="2.40.150.20">
    <property type="entry name" value="Ribosomal protein L14"/>
    <property type="match status" value="1"/>
</dbReference>
<dbReference type="HAMAP" id="MF_01367">
    <property type="entry name" value="Ribosomal_uL14"/>
    <property type="match status" value="1"/>
</dbReference>
<dbReference type="InterPro" id="IPR000218">
    <property type="entry name" value="Ribosomal_uL14"/>
</dbReference>
<dbReference type="InterPro" id="IPR005745">
    <property type="entry name" value="Ribosomal_uL14_bac-type"/>
</dbReference>
<dbReference type="InterPro" id="IPR019972">
    <property type="entry name" value="Ribosomal_uL14_CS"/>
</dbReference>
<dbReference type="InterPro" id="IPR036853">
    <property type="entry name" value="Ribosomal_uL14_sf"/>
</dbReference>
<dbReference type="NCBIfam" id="TIGR01067">
    <property type="entry name" value="rplN_bact"/>
    <property type="match status" value="1"/>
</dbReference>
<dbReference type="PANTHER" id="PTHR11761">
    <property type="entry name" value="50S/60S RIBOSOMAL PROTEIN L14/L23"/>
    <property type="match status" value="1"/>
</dbReference>
<dbReference type="PANTHER" id="PTHR11761:SF3">
    <property type="entry name" value="LARGE RIBOSOMAL SUBUNIT PROTEIN UL14M"/>
    <property type="match status" value="1"/>
</dbReference>
<dbReference type="Pfam" id="PF00238">
    <property type="entry name" value="Ribosomal_L14"/>
    <property type="match status" value="1"/>
</dbReference>
<dbReference type="SMART" id="SM01374">
    <property type="entry name" value="Ribosomal_L14"/>
    <property type="match status" value="1"/>
</dbReference>
<dbReference type="SUPFAM" id="SSF50193">
    <property type="entry name" value="Ribosomal protein L14"/>
    <property type="match status" value="1"/>
</dbReference>
<dbReference type="PROSITE" id="PS00049">
    <property type="entry name" value="RIBOSOMAL_L14"/>
    <property type="match status" value="1"/>
</dbReference>
<accession>B1Y8C7</accession>
<sequence>MIQMQSRLDVADNTGAKSVMCIKVLGGSKRRYAGIGDVIKVSIKDAAPRGRVKKGEVYNAVVVRTAKGVRRQDGSLVKFDGNAAVLLNAKLEPIGTRIFGPVTRELRTERFMKIVSLAPEVL</sequence>
<organism>
    <name type="scientific">Leptothrix cholodnii (strain ATCC 51168 / LMG 8142 / SP-6)</name>
    <name type="common">Leptothrix discophora (strain SP-6)</name>
    <dbReference type="NCBI Taxonomy" id="395495"/>
    <lineage>
        <taxon>Bacteria</taxon>
        <taxon>Pseudomonadati</taxon>
        <taxon>Pseudomonadota</taxon>
        <taxon>Betaproteobacteria</taxon>
        <taxon>Burkholderiales</taxon>
        <taxon>Sphaerotilaceae</taxon>
        <taxon>Leptothrix</taxon>
    </lineage>
</organism>
<evidence type="ECO:0000255" key="1">
    <source>
        <dbReference type="HAMAP-Rule" id="MF_01367"/>
    </source>
</evidence>
<evidence type="ECO:0000305" key="2"/>
<feature type="chain" id="PRO_1000144292" description="Large ribosomal subunit protein uL14">
    <location>
        <begin position="1"/>
        <end position="122"/>
    </location>
</feature>
<comment type="function">
    <text evidence="1">Binds to 23S rRNA. Forms part of two intersubunit bridges in the 70S ribosome.</text>
</comment>
<comment type="subunit">
    <text evidence="1">Part of the 50S ribosomal subunit. Forms a cluster with proteins L3 and L19. In the 70S ribosome, L14 and L19 interact and together make contacts with the 16S rRNA in bridges B5 and B8.</text>
</comment>
<comment type="similarity">
    <text evidence="1">Belongs to the universal ribosomal protein uL14 family.</text>
</comment>
<name>RL14_LEPCP</name>
<protein>
    <recommendedName>
        <fullName evidence="1">Large ribosomal subunit protein uL14</fullName>
    </recommendedName>
    <alternativeName>
        <fullName evidence="2">50S ribosomal protein L14</fullName>
    </alternativeName>
</protein>
<keyword id="KW-1185">Reference proteome</keyword>
<keyword id="KW-0687">Ribonucleoprotein</keyword>
<keyword id="KW-0689">Ribosomal protein</keyword>
<keyword id="KW-0694">RNA-binding</keyword>
<keyword id="KW-0699">rRNA-binding</keyword>